<gene>
    <name type="primary">UL47</name>
</gene>
<name>ITP_HCMVM</name>
<accession>Q6SW85</accession>
<accession>D2K3L4</accession>
<protein>
    <recommendedName>
        <fullName evidence="1">Inner tegument protein</fullName>
    </recommendedName>
</protein>
<sequence length="983" mass="110024">MMARRTVDFKKLIEQLRARATDKAEALNTVSQLEIGAVDAQDVTASAVRAFVGALPSSGYHFGFVRQNVVFYLLSHATVQTARDPLYAAEQLHEQLDRFLRHQHDGGGDEDRLPFYHNGATLTAFQKLLQTLREIQTVIAEQSGGTAAAADLIASNNASTERRGKKGGSSSGGQQPLVRRVITQLETAATEARPYVNCRAVAELLDLTYQRLIYWACTLMPYVLFRRDTDTELDTVLLMHFFYTHYRSVNGDLAVEFQNYVKNSVRHMSSFVSSDIDGDQKPGAEHMRDVSYKLFVGNLQARDASGLMFPIISTRISTVNLYLSPERMFFHPGLISRLLSEEVSPRANLDAYARVCDRVLEDHLHTPRRVQRLLDLTQMVMRLVELGFNHDTCAAYAQMALIQPASQKSSLFVSEIREKLIQIIYNFYTFFMCLYVYSPTFLFDHRRRLILEQHRSTLIGSKEELQHVWSNVTLNVNTHFAVQYTEEDFEAHTKGATEAEREYLYRDLHSKWGVHLFTLRPSRGAAGAASPLPPLDGVTRSDILRECALVNLNEGRVNYASLLAFSHHPEFPSIFAQLVVVTEFSEIFGIPQGLFQAVGSPRLFALIQLCRVLLPEQVTLYQNLVSIYNLTTFVKHIDAAVFKTVRDCVFDIATTLEHLSGVPVTPNVDLLAELMARSVAHNLYTTVNPLIEDVMRSSAGSLRNYLRHTRLCFGLARGRARLSEDGVTVYVEVQGQYGLRVPTTRFVEQLRELVRRDRLLAENLRGLNERLLSVRVRVRQISSDTEEVSRHAKGHRTVAQMSKALKKTASKIKMLETRVTLALEQAQRSNGAVVTAVQRALAVFDVLSRENLERRGAQLCLTEATSLLHRHRALAPMTWPAGTGVAAAAEADGALREFLEAPWESAPQPPRLRMTPDTDHEESTAGATSVPEVLGARYEPAHLAASDLLNWYIVPVSQAQQDILSSIDPPAGSTSVSLPPASP</sequence>
<organismHost>
    <name type="scientific">Homo sapiens</name>
    <name type="common">Human</name>
    <dbReference type="NCBI Taxonomy" id="9606"/>
</organismHost>
<feature type="chain" id="PRO_0000418296" description="Inner tegument protein">
    <location>
        <begin position="1"/>
        <end position="983"/>
    </location>
</feature>
<feature type="region of interest" description="Interaction with large tegument protein" evidence="1">
    <location>
        <begin position="474"/>
        <end position="983"/>
    </location>
</feature>
<feature type="region of interest" description="Disordered" evidence="2">
    <location>
        <begin position="902"/>
        <end position="932"/>
    </location>
</feature>
<feature type="compositionally biased region" description="Basic and acidic residues" evidence="2">
    <location>
        <begin position="914"/>
        <end position="923"/>
    </location>
</feature>
<organism>
    <name type="scientific">Human cytomegalovirus (strain Merlin)</name>
    <name type="common">HHV-5</name>
    <name type="synonym">Human herpesvirus 5</name>
    <dbReference type="NCBI Taxonomy" id="295027"/>
    <lineage>
        <taxon>Viruses</taxon>
        <taxon>Duplodnaviria</taxon>
        <taxon>Heunggongvirae</taxon>
        <taxon>Peploviricota</taxon>
        <taxon>Herviviricetes</taxon>
        <taxon>Herpesvirales</taxon>
        <taxon>Orthoherpesviridae</taxon>
        <taxon>Betaherpesvirinae</taxon>
        <taxon>Cytomegalovirus</taxon>
        <taxon>Cytomegalovirus humanbeta5</taxon>
        <taxon>Human cytomegalovirus</taxon>
    </lineage>
</organism>
<evidence type="ECO:0000255" key="1">
    <source>
        <dbReference type="HAMAP-Rule" id="MF_04043"/>
    </source>
</evidence>
<evidence type="ECO:0000256" key="2">
    <source>
        <dbReference type="SAM" id="MobiDB-lite"/>
    </source>
</evidence>
<keyword id="KW-1035">Host cytoplasm</keyword>
<keyword id="KW-1040">Host Golgi apparatus</keyword>
<keyword id="KW-1048">Host nucleus</keyword>
<keyword id="KW-1185">Reference proteome</keyword>
<keyword id="KW-0946">Virion</keyword>
<keyword id="KW-0920">Virion tegument</keyword>
<comment type="function">
    <text evidence="1">Plays an essential role in cytoplasmic secondary envelopment during viral egress. Interacts with the capsid via the large tegument protein/LTP and participates in its transport to the host trans-Golgi network (TGN) where secondary envelopment occurs. Modulates tegumentation and capsid accumulation at the viral assembly complex.</text>
</comment>
<comment type="subunit">
    <text evidence="1">Interacts (via C-terminus) with the large tegument protein/LTP (via N-terminus).</text>
</comment>
<comment type="subcellular location">
    <subcellularLocation>
        <location evidence="1">Virion tegument</location>
    </subcellularLocation>
    <subcellularLocation>
        <location evidence="1">Host cytoplasm</location>
    </subcellularLocation>
    <subcellularLocation>
        <location evidence="1">Host nucleus</location>
    </subcellularLocation>
    <subcellularLocation>
        <location evidence="1">Host Golgi apparatus</location>
        <location evidence="1">Host trans-Golgi network</location>
    </subcellularLocation>
</comment>
<comment type="similarity">
    <text evidence="1">Belongs to the herpesviridae inner tegument protein family.</text>
</comment>
<proteinExistence type="inferred from homology"/>
<reference key="1">
    <citation type="journal article" date="2004" name="J. Gen. Virol.">
        <title>Genetic content of wild-type human cytomegalovirus.</title>
        <authorList>
            <person name="Dolan A."/>
            <person name="Cunningham C."/>
            <person name="Hector R.D."/>
            <person name="Hassan-Walker A.F."/>
            <person name="Lee L."/>
            <person name="Addison C."/>
            <person name="Dargan D.J."/>
            <person name="McGeoch D.J."/>
            <person name="Gatherer D."/>
            <person name="Emery V.C."/>
            <person name="Griffiths P.D."/>
            <person name="Sinzger C."/>
            <person name="McSharry B.P."/>
            <person name="Wilkinson G.W.G."/>
            <person name="Davison A.J."/>
        </authorList>
    </citation>
    <scope>NUCLEOTIDE SEQUENCE [LARGE SCALE GENOMIC DNA]</scope>
</reference>
<dbReference type="EMBL" id="AY446894">
    <property type="protein sequence ID" value="AAR31611.1"/>
    <property type="molecule type" value="Genomic_DNA"/>
</dbReference>
<dbReference type="RefSeq" id="YP_081505.1">
    <property type="nucleotide sequence ID" value="NC_006273.2"/>
</dbReference>
<dbReference type="SMR" id="Q6SW85"/>
<dbReference type="BioGRID" id="1678074">
    <property type="interactions" value="1"/>
</dbReference>
<dbReference type="DNASU" id="3077521"/>
<dbReference type="GeneID" id="3077521"/>
<dbReference type="KEGG" id="vg:3077521"/>
<dbReference type="Reactome" id="R-HSA-9609690">
    <property type="pathway name" value="HCMV Early Events"/>
</dbReference>
<dbReference type="Reactome" id="R-HSA-9610379">
    <property type="pathway name" value="HCMV Late Events"/>
</dbReference>
<dbReference type="Proteomes" id="UP000000938">
    <property type="component" value="Segment"/>
</dbReference>
<dbReference type="GO" id="GO:0044177">
    <property type="term" value="C:host cell Golgi apparatus"/>
    <property type="evidence" value="ECO:0007669"/>
    <property type="project" value="UniProtKB-SubCell"/>
</dbReference>
<dbReference type="GO" id="GO:0042025">
    <property type="term" value="C:host cell nucleus"/>
    <property type="evidence" value="ECO:0007669"/>
    <property type="project" value="UniProtKB-SubCell"/>
</dbReference>
<dbReference type="GO" id="GO:0072517">
    <property type="term" value="C:host cell viral assembly compartment"/>
    <property type="evidence" value="ECO:0000304"/>
    <property type="project" value="Reactome"/>
</dbReference>
<dbReference type="GO" id="GO:0019033">
    <property type="term" value="C:viral tegument"/>
    <property type="evidence" value="ECO:0000304"/>
    <property type="project" value="Reactome"/>
</dbReference>
<dbReference type="GO" id="GO:0019068">
    <property type="term" value="P:virion assembly"/>
    <property type="evidence" value="ECO:0007669"/>
    <property type="project" value="InterPro"/>
</dbReference>
<dbReference type="HAMAP" id="MF_04043">
    <property type="entry name" value="HSV_ITP"/>
    <property type="match status" value="1"/>
</dbReference>
<dbReference type="InterPro" id="IPR007611">
    <property type="entry name" value="Herpes_U30"/>
</dbReference>
<dbReference type="InterPro" id="IPR034738">
    <property type="entry name" value="HSV_ITP"/>
</dbReference>
<dbReference type="Pfam" id="PF04523">
    <property type="entry name" value="Herpes_U30"/>
    <property type="match status" value="1"/>
</dbReference>